<name>EX7L_RHIEC</name>
<protein>
    <recommendedName>
        <fullName evidence="1">Exodeoxyribonuclease 7 large subunit</fullName>
        <ecNumber evidence="1">3.1.11.6</ecNumber>
    </recommendedName>
    <alternativeName>
        <fullName evidence="1">Exodeoxyribonuclease VII large subunit</fullName>
        <shortName evidence="1">Exonuclease VII large subunit</shortName>
    </alternativeName>
</protein>
<proteinExistence type="inferred from homology"/>
<dbReference type="EC" id="3.1.11.6" evidence="1"/>
<dbReference type="EMBL" id="CP000133">
    <property type="protein sequence ID" value="ABC89099.1"/>
    <property type="molecule type" value="Genomic_DNA"/>
</dbReference>
<dbReference type="RefSeq" id="WP_011423661.1">
    <property type="nucleotide sequence ID" value="NC_007761.1"/>
</dbReference>
<dbReference type="SMR" id="Q2KDI7"/>
<dbReference type="KEGG" id="ret:RHE_CH00276"/>
<dbReference type="eggNOG" id="COG1570">
    <property type="taxonomic scope" value="Bacteria"/>
</dbReference>
<dbReference type="HOGENOM" id="CLU_023625_3_1_5"/>
<dbReference type="OrthoDB" id="9802795at2"/>
<dbReference type="Proteomes" id="UP000001936">
    <property type="component" value="Chromosome"/>
</dbReference>
<dbReference type="GO" id="GO:0005737">
    <property type="term" value="C:cytoplasm"/>
    <property type="evidence" value="ECO:0007669"/>
    <property type="project" value="UniProtKB-SubCell"/>
</dbReference>
<dbReference type="GO" id="GO:0009318">
    <property type="term" value="C:exodeoxyribonuclease VII complex"/>
    <property type="evidence" value="ECO:0007669"/>
    <property type="project" value="InterPro"/>
</dbReference>
<dbReference type="GO" id="GO:0008855">
    <property type="term" value="F:exodeoxyribonuclease VII activity"/>
    <property type="evidence" value="ECO:0007669"/>
    <property type="project" value="UniProtKB-UniRule"/>
</dbReference>
<dbReference type="GO" id="GO:0003676">
    <property type="term" value="F:nucleic acid binding"/>
    <property type="evidence" value="ECO:0007669"/>
    <property type="project" value="InterPro"/>
</dbReference>
<dbReference type="GO" id="GO:0006308">
    <property type="term" value="P:DNA catabolic process"/>
    <property type="evidence" value="ECO:0007669"/>
    <property type="project" value="UniProtKB-UniRule"/>
</dbReference>
<dbReference type="CDD" id="cd04489">
    <property type="entry name" value="ExoVII_LU_OBF"/>
    <property type="match status" value="1"/>
</dbReference>
<dbReference type="HAMAP" id="MF_00378">
    <property type="entry name" value="Exonuc_7_L"/>
    <property type="match status" value="1"/>
</dbReference>
<dbReference type="InterPro" id="IPR003753">
    <property type="entry name" value="Exonuc_VII_L"/>
</dbReference>
<dbReference type="InterPro" id="IPR020579">
    <property type="entry name" value="Exonuc_VII_lsu_C"/>
</dbReference>
<dbReference type="InterPro" id="IPR025824">
    <property type="entry name" value="OB-fold_nuc-bd_dom"/>
</dbReference>
<dbReference type="NCBIfam" id="TIGR00237">
    <property type="entry name" value="xseA"/>
    <property type="match status" value="1"/>
</dbReference>
<dbReference type="PANTHER" id="PTHR30008">
    <property type="entry name" value="EXODEOXYRIBONUCLEASE 7 LARGE SUBUNIT"/>
    <property type="match status" value="1"/>
</dbReference>
<dbReference type="PANTHER" id="PTHR30008:SF0">
    <property type="entry name" value="EXODEOXYRIBONUCLEASE 7 LARGE SUBUNIT"/>
    <property type="match status" value="1"/>
</dbReference>
<dbReference type="Pfam" id="PF02601">
    <property type="entry name" value="Exonuc_VII_L"/>
    <property type="match status" value="2"/>
</dbReference>
<dbReference type="Pfam" id="PF13742">
    <property type="entry name" value="tRNA_anti_2"/>
    <property type="match status" value="1"/>
</dbReference>
<gene>
    <name evidence="1" type="primary">xseA</name>
    <name type="ordered locus">RHE_CH00276</name>
</gene>
<comment type="function">
    <text evidence="1">Bidirectionally degrades single-stranded DNA into large acid-insoluble oligonucleotides, which are then degraded further into small acid-soluble oligonucleotides.</text>
</comment>
<comment type="catalytic activity">
    <reaction evidence="1">
        <text>Exonucleolytic cleavage in either 5'- to 3'- or 3'- to 5'-direction to yield nucleoside 5'-phosphates.</text>
        <dbReference type="EC" id="3.1.11.6"/>
    </reaction>
</comment>
<comment type="subunit">
    <text evidence="1">Heterooligomer composed of large and small subunits.</text>
</comment>
<comment type="subcellular location">
    <subcellularLocation>
        <location evidence="1">Cytoplasm</location>
    </subcellularLocation>
</comment>
<comment type="similarity">
    <text evidence="1">Belongs to the XseA family.</text>
</comment>
<organism>
    <name type="scientific">Rhizobium etli (strain ATCC 51251 / DSM 11541 / JCM 21823 / NBRC 15573 / CFN 42)</name>
    <dbReference type="NCBI Taxonomy" id="347834"/>
    <lineage>
        <taxon>Bacteria</taxon>
        <taxon>Pseudomonadati</taxon>
        <taxon>Pseudomonadota</taxon>
        <taxon>Alphaproteobacteria</taxon>
        <taxon>Hyphomicrobiales</taxon>
        <taxon>Rhizobiaceae</taxon>
        <taxon>Rhizobium/Agrobacterium group</taxon>
        <taxon>Rhizobium</taxon>
    </lineage>
</organism>
<accession>Q2KDI7</accession>
<evidence type="ECO:0000255" key="1">
    <source>
        <dbReference type="HAMAP-Rule" id="MF_00378"/>
    </source>
</evidence>
<evidence type="ECO:0000256" key="2">
    <source>
        <dbReference type="SAM" id="MobiDB-lite"/>
    </source>
</evidence>
<sequence length="526" mass="57733">MSNLFDSDSPTNLAEYSVSELSGSIKRTIETAFDQVRVRGEISGYRGPHSSGHAYFALKDDRARIDAVIWKGTFSRLKFRPEEGMEVIATGKVTTFPGSSKYQIVIETLEPAGAGALMALIEERKRRLGAEGLFDAARKKRLPFMPHVIGVVTSPTGAVIRDILHRISDRFPVHVLVWPVKVQGEGSGEEVANAIRGFNALEPASAISRPDVLIVARGGGSLEDLWSFNDEIVVRAAAESRIPLISAVGHETDWTLIDYAADVRAPTPTGAAEMAVPVKAELEAQAAALAARLQGCMNRQMDQRRQSVRSLMRAFPSLDQLLALPRRRFDEAAAGLGRGLELNTINKRRGFERVIAHLRPDLLSGRISERRQMLNERMVRAERMVERLIDRSASRVERAEAILASLPARLKAQTDRSRERLGNLTRHADTAIRHQLTRARAELSAQDRVLQSLSYKNVLRRGYAVIRDEDNRPVSQAAALSAGMGIAIEFADGRIGAMTTEGGTPPGGAKKRSTKPAEPTKQGSLF</sequence>
<feature type="chain" id="PRO_0000303812" description="Exodeoxyribonuclease 7 large subunit">
    <location>
        <begin position="1"/>
        <end position="526"/>
    </location>
</feature>
<feature type="region of interest" description="Disordered" evidence="2">
    <location>
        <begin position="497"/>
        <end position="526"/>
    </location>
</feature>
<keyword id="KW-0963">Cytoplasm</keyword>
<keyword id="KW-0269">Exonuclease</keyword>
<keyword id="KW-0378">Hydrolase</keyword>
<keyword id="KW-0540">Nuclease</keyword>
<keyword id="KW-1185">Reference proteome</keyword>
<reference key="1">
    <citation type="journal article" date="2006" name="Proc. Natl. Acad. Sci. U.S.A.">
        <title>The partitioned Rhizobium etli genome: genetic and metabolic redundancy in seven interacting replicons.</title>
        <authorList>
            <person name="Gonzalez V."/>
            <person name="Santamaria R.I."/>
            <person name="Bustos P."/>
            <person name="Hernandez-Gonzalez I."/>
            <person name="Medrano-Soto A."/>
            <person name="Moreno-Hagelsieb G."/>
            <person name="Janga S.C."/>
            <person name="Ramirez M.A."/>
            <person name="Jimenez-Jacinto V."/>
            <person name="Collado-Vides J."/>
            <person name="Davila G."/>
        </authorList>
    </citation>
    <scope>NUCLEOTIDE SEQUENCE [LARGE SCALE GENOMIC DNA]</scope>
    <source>
        <strain>ATCC 51251 / DSM 11541 / JCM 21823 / NBRC 15573 / CFN 42</strain>
    </source>
</reference>